<protein>
    <recommendedName>
        <fullName evidence="6">Aspartate aminotransferase, cytoplasmic</fullName>
        <shortName>cAspAT</shortName>
        <ecNumber evidence="3">2.6.1.1</ecNumber>
        <ecNumber evidence="3">2.6.1.3</ecNumber>
    </recommendedName>
    <alternativeName>
        <fullName>Cysteine aminotransferase, cytoplasmic</fullName>
    </alternativeName>
    <alternativeName>
        <fullName>Cysteine transaminase, cytoplasmic</fullName>
        <shortName>cCAT</shortName>
    </alternativeName>
    <alternativeName>
        <fullName>Glutamate oxaloacetate transaminase 1</fullName>
    </alternativeName>
    <alternativeName>
        <fullName>Transaminase A</fullName>
    </alternativeName>
</protein>
<evidence type="ECO:0000250" key="1"/>
<evidence type="ECO:0000250" key="2">
    <source>
        <dbReference type="UniProtKB" id="P08906"/>
    </source>
</evidence>
<evidence type="ECO:0000250" key="3">
    <source>
        <dbReference type="UniProtKB" id="P13221"/>
    </source>
</evidence>
<evidence type="ECO:0000250" key="4">
    <source>
        <dbReference type="UniProtKB" id="P17174"/>
    </source>
</evidence>
<evidence type="ECO:0000269" key="5">
    <source>
    </source>
</evidence>
<evidence type="ECO:0000305" key="6"/>
<evidence type="ECO:0000312" key="7">
    <source>
        <dbReference type="MGI" id="MGI:95791"/>
    </source>
</evidence>
<evidence type="ECO:0007744" key="8">
    <source>
    </source>
</evidence>
<gene>
    <name evidence="7" type="primary">Got1</name>
</gene>
<keyword id="KW-0028">Amino-acid biosynthesis</keyword>
<keyword id="KW-0032">Aminotransferase</keyword>
<keyword id="KW-0963">Cytoplasm</keyword>
<keyword id="KW-0903">Direct protein sequencing</keyword>
<keyword id="KW-0597">Phosphoprotein</keyword>
<keyword id="KW-0663">Pyridoxal phosphate</keyword>
<keyword id="KW-1185">Reference proteome</keyword>
<keyword id="KW-0808">Transferase</keyword>
<organism>
    <name type="scientific">Mus musculus</name>
    <name type="common">Mouse</name>
    <dbReference type="NCBI Taxonomy" id="10090"/>
    <lineage>
        <taxon>Eukaryota</taxon>
        <taxon>Metazoa</taxon>
        <taxon>Chordata</taxon>
        <taxon>Craniata</taxon>
        <taxon>Vertebrata</taxon>
        <taxon>Euteleostomi</taxon>
        <taxon>Mammalia</taxon>
        <taxon>Eutheria</taxon>
        <taxon>Euarchontoglires</taxon>
        <taxon>Glires</taxon>
        <taxon>Rodentia</taxon>
        <taxon>Myomorpha</taxon>
        <taxon>Muroidea</taxon>
        <taxon>Muridae</taxon>
        <taxon>Murinae</taxon>
        <taxon>Mus</taxon>
        <taxon>Mus</taxon>
    </lineage>
</organism>
<reference key="1">
    <citation type="journal article" date="1986" name="J. Biol. Chem.">
        <title>Cloning and sequence analysis of mRNA for mouse aspartate aminotransferase isoenzymes.</title>
        <authorList>
            <person name="Obaru K."/>
            <person name="Nomiyama H."/>
            <person name="Shimada K."/>
            <person name="Nagashima F."/>
            <person name="Morino Y."/>
        </authorList>
    </citation>
    <scope>NUCLEOTIDE SEQUENCE [MRNA]</scope>
    <source>
        <tissue>Liver</tissue>
    </source>
</reference>
<reference key="2">
    <citation type="journal article" date="1988" name="J. Mol. Biol.">
        <title>Structural organization of the mouse aspartate aminotransferase isoenzyme genes. Introns antedate the divergence of cytosolic and mitochondrial isoenzyme genes.</title>
        <authorList>
            <person name="Obaru K."/>
            <person name="Tsuzuki T."/>
            <person name="Setoyama C."/>
            <person name="Shimada K."/>
        </authorList>
    </citation>
    <scope>NUCLEOTIDE SEQUENCE [GENOMIC DNA]</scope>
</reference>
<reference key="3">
    <citation type="journal article" date="2005" name="Science">
        <title>The transcriptional landscape of the mammalian genome.</title>
        <authorList>
            <person name="Carninci P."/>
            <person name="Kasukawa T."/>
            <person name="Katayama S."/>
            <person name="Gough J."/>
            <person name="Frith M.C."/>
            <person name="Maeda N."/>
            <person name="Oyama R."/>
            <person name="Ravasi T."/>
            <person name="Lenhard B."/>
            <person name="Wells C."/>
            <person name="Kodzius R."/>
            <person name="Shimokawa K."/>
            <person name="Bajic V.B."/>
            <person name="Brenner S.E."/>
            <person name="Batalov S."/>
            <person name="Forrest A.R."/>
            <person name="Zavolan M."/>
            <person name="Davis M.J."/>
            <person name="Wilming L.G."/>
            <person name="Aidinis V."/>
            <person name="Allen J.E."/>
            <person name="Ambesi-Impiombato A."/>
            <person name="Apweiler R."/>
            <person name="Aturaliya R.N."/>
            <person name="Bailey T.L."/>
            <person name="Bansal M."/>
            <person name="Baxter L."/>
            <person name="Beisel K.W."/>
            <person name="Bersano T."/>
            <person name="Bono H."/>
            <person name="Chalk A.M."/>
            <person name="Chiu K.P."/>
            <person name="Choudhary V."/>
            <person name="Christoffels A."/>
            <person name="Clutterbuck D.R."/>
            <person name="Crowe M.L."/>
            <person name="Dalla E."/>
            <person name="Dalrymple B.P."/>
            <person name="de Bono B."/>
            <person name="Della Gatta G."/>
            <person name="di Bernardo D."/>
            <person name="Down T."/>
            <person name="Engstrom P."/>
            <person name="Fagiolini M."/>
            <person name="Faulkner G."/>
            <person name="Fletcher C.F."/>
            <person name="Fukushima T."/>
            <person name="Furuno M."/>
            <person name="Futaki S."/>
            <person name="Gariboldi M."/>
            <person name="Georgii-Hemming P."/>
            <person name="Gingeras T.R."/>
            <person name="Gojobori T."/>
            <person name="Green R.E."/>
            <person name="Gustincich S."/>
            <person name="Harbers M."/>
            <person name="Hayashi Y."/>
            <person name="Hensch T.K."/>
            <person name="Hirokawa N."/>
            <person name="Hill D."/>
            <person name="Huminiecki L."/>
            <person name="Iacono M."/>
            <person name="Ikeo K."/>
            <person name="Iwama A."/>
            <person name="Ishikawa T."/>
            <person name="Jakt M."/>
            <person name="Kanapin A."/>
            <person name="Katoh M."/>
            <person name="Kawasawa Y."/>
            <person name="Kelso J."/>
            <person name="Kitamura H."/>
            <person name="Kitano H."/>
            <person name="Kollias G."/>
            <person name="Krishnan S.P."/>
            <person name="Kruger A."/>
            <person name="Kummerfeld S.K."/>
            <person name="Kurochkin I.V."/>
            <person name="Lareau L.F."/>
            <person name="Lazarevic D."/>
            <person name="Lipovich L."/>
            <person name="Liu J."/>
            <person name="Liuni S."/>
            <person name="McWilliam S."/>
            <person name="Madan Babu M."/>
            <person name="Madera M."/>
            <person name="Marchionni L."/>
            <person name="Matsuda H."/>
            <person name="Matsuzawa S."/>
            <person name="Miki H."/>
            <person name="Mignone F."/>
            <person name="Miyake S."/>
            <person name="Morris K."/>
            <person name="Mottagui-Tabar S."/>
            <person name="Mulder N."/>
            <person name="Nakano N."/>
            <person name="Nakauchi H."/>
            <person name="Ng P."/>
            <person name="Nilsson R."/>
            <person name="Nishiguchi S."/>
            <person name="Nishikawa S."/>
            <person name="Nori F."/>
            <person name="Ohara O."/>
            <person name="Okazaki Y."/>
            <person name="Orlando V."/>
            <person name="Pang K.C."/>
            <person name="Pavan W.J."/>
            <person name="Pavesi G."/>
            <person name="Pesole G."/>
            <person name="Petrovsky N."/>
            <person name="Piazza S."/>
            <person name="Reed J."/>
            <person name="Reid J.F."/>
            <person name="Ring B.Z."/>
            <person name="Ringwald M."/>
            <person name="Rost B."/>
            <person name="Ruan Y."/>
            <person name="Salzberg S.L."/>
            <person name="Sandelin A."/>
            <person name="Schneider C."/>
            <person name="Schoenbach C."/>
            <person name="Sekiguchi K."/>
            <person name="Semple C.A."/>
            <person name="Seno S."/>
            <person name="Sessa L."/>
            <person name="Sheng Y."/>
            <person name="Shibata Y."/>
            <person name="Shimada H."/>
            <person name="Shimada K."/>
            <person name="Silva D."/>
            <person name="Sinclair B."/>
            <person name="Sperling S."/>
            <person name="Stupka E."/>
            <person name="Sugiura K."/>
            <person name="Sultana R."/>
            <person name="Takenaka Y."/>
            <person name="Taki K."/>
            <person name="Tammoja K."/>
            <person name="Tan S.L."/>
            <person name="Tang S."/>
            <person name="Taylor M.S."/>
            <person name="Tegner J."/>
            <person name="Teichmann S.A."/>
            <person name="Ueda H.R."/>
            <person name="van Nimwegen E."/>
            <person name="Verardo R."/>
            <person name="Wei C.L."/>
            <person name="Yagi K."/>
            <person name="Yamanishi H."/>
            <person name="Zabarovsky E."/>
            <person name="Zhu S."/>
            <person name="Zimmer A."/>
            <person name="Hide W."/>
            <person name="Bult C."/>
            <person name="Grimmond S.M."/>
            <person name="Teasdale R.D."/>
            <person name="Liu E.T."/>
            <person name="Brusic V."/>
            <person name="Quackenbush J."/>
            <person name="Wahlestedt C."/>
            <person name="Mattick J.S."/>
            <person name="Hume D.A."/>
            <person name="Kai C."/>
            <person name="Sasaki D."/>
            <person name="Tomaru Y."/>
            <person name="Fukuda S."/>
            <person name="Kanamori-Katayama M."/>
            <person name="Suzuki M."/>
            <person name="Aoki J."/>
            <person name="Arakawa T."/>
            <person name="Iida J."/>
            <person name="Imamura K."/>
            <person name="Itoh M."/>
            <person name="Kato T."/>
            <person name="Kawaji H."/>
            <person name="Kawagashira N."/>
            <person name="Kawashima T."/>
            <person name="Kojima M."/>
            <person name="Kondo S."/>
            <person name="Konno H."/>
            <person name="Nakano K."/>
            <person name="Ninomiya N."/>
            <person name="Nishio T."/>
            <person name="Okada M."/>
            <person name="Plessy C."/>
            <person name="Shibata K."/>
            <person name="Shiraki T."/>
            <person name="Suzuki S."/>
            <person name="Tagami M."/>
            <person name="Waki K."/>
            <person name="Watahiki A."/>
            <person name="Okamura-Oho Y."/>
            <person name="Suzuki H."/>
            <person name="Kawai J."/>
            <person name="Hayashizaki Y."/>
        </authorList>
    </citation>
    <scope>NUCLEOTIDE SEQUENCE [LARGE SCALE MRNA]</scope>
    <source>
        <strain>C57BL/6J</strain>
        <tissue>Heart</tissue>
    </source>
</reference>
<reference key="4">
    <citation type="journal article" date="2004" name="Genome Res.">
        <title>The status, quality, and expansion of the NIH full-length cDNA project: the Mammalian Gene Collection (MGC).</title>
        <authorList>
            <consortium name="The MGC Project Team"/>
        </authorList>
    </citation>
    <scope>NUCLEOTIDE SEQUENCE [LARGE SCALE MRNA]</scope>
    <source>
        <strain>C57BL/6J</strain>
        <tissue>Mammary gland</tissue>
    </source>
</reference>
<reference key="5">
    <citation type="submission" date="2009-01" db="UniProtKB">
        <authorList>
            <person name="Lubec G."/>
            <person name="Klug S."/>
            <person name="Kang S.U."/>
            <person name="Sunyer B."/>
            <person name="Chen W.-Q."/>
        </authorList>
    </citation>
    <scope>PROTEIN SEQUENCE OF 2-55; 61-81; 87-97; 101-166; 208-236; 260-276; 306-318 AND 347-411</scope>
    <scope>IDENTIFICATION BY MASS SPECTROMETRY</scope>
    <source>
        <strain>C57BL/6J</strain>
        <strain>OF1</strain>
        <tissue>Brain</tissue>
        <tissue>Hippocampus</tissue>
    </source>
</reference>
<reference key="6">
    <citation type="journal article" date="2008" name="J. Proteome Res.">
        <title>Large-scale identification and evolution indexing of tyrosine phosphorylation sites from murine brain.</title>
        <authorList>
            <person name="Ballif B.A."/>
            <person name="Carey G.R."/>
            <person name="Sunyaev S.R."/>
            <person name="Gygi S.P."/>
        </authorList>
    </citation>
    <scope>IDENTIFICATION BY MASS SPECTROMETRY [LARGE SCALE ANALYSIS]</scope>
    <source>
        <tissue>Brain</tissue>
    </source>
</reference>
<reference key="7">
    <citation type="journal article" date="2010" name="Cell">
        <title>A tissue-specific atlas of mouse protein phosphorylation and expression.</title>
        <authorList>
            <person name="Huttlin E.L."/>
            <person name="Jedrychowski M.P."/>
            <person name="Elias J.E."/>
            <person name="Goswami T."/>
            <person name="Rad R."/>
            <person name="Beausoleil S.A."/>
            <person name="Villen J."/>
            <person name="Haas W."/>
            <person name="Sowa M.E."/>
            <person name="Gygi S.P."/>
        </authorList>
    </citation>
    <scope>IDENTIFICATION BY MASS SPECTROMETRY [LARGE SCALE ANALYSIS]</scope>
    <source>
        <tissue>Brain</tissue>
        <tissue>Brown adipose tissue</tissue>
        <tissue>Heart</tissue>
        <tissue>Kidney</tissue>
        <tissue>Liver</tissue>
        <tissue>Lung</tissue>
        <tissue>Pancreas</tissue>
        <tissue>Spleen</tissue>
        <tissue>Testis</tissue>
    </source>
</reference>
<reference key="8">
    <citation type="journal article" date="2011" name="J. Biol. Chem.">
        <title>Hydrogen sulfide protects the retina from light-induced degeneration by the modulation of Ca2+ influx.</title>
        <authorList>
            <person name="Mikami Y."/>
            <person name="Shibuya N."/>
            <person name="Kimura Y."/>
            <person name="Nagahara N."/>
            <person name="Yamada M."/>
            <person name="Kimura H."/>
        </authorList>
    </citation>
    <scope>TISSUE SPECIFICITY</scope>
    <scope>ACTIVITY REGULATION</scope>
</reference>
<reference key="9">
    <citation type="journal article" date="2013" name="Mol. Cell">
        <title>SIRT5-mediated lysine desuccinylation impacts diverse metabolic pathways.</title>
        <authorList>
            <person name="Park J."/>
            <person name="Chen Y."/>
            <person name="Tishkoff D.X."/>
            <person name="Peng C."/>
            <person name="Tan M."/>
            <person name="Dai L."/>
            <person name="Xie Z."/>
            <person name="Zhang Y."/>
            <person name="Zwaans B.M."/>
            <person name="Skinner M.E."/>
            <person name="Lombard D.B."/>
            <person name="Zhao Y."/>
        </authorList>
    </citation>
    <scope>SUCCINYLATION [LARGE SCALE ANALYSIS] AT LYS-318</scope>
    <scope>IDENTIFICATION BY MASS SPECTROMETRY [LARGE SCALE ANALYSIS]</scope>
    <source>
        <tissue>Liver</tissue>
    </source>
</reference>
<sequence>MAPPSVFAQVPQAPPVLVFKLTADFRDDPDPRKVNLGVGAYRTDESQPWVLPVVRKVEQKIANDNSLNHEYLPILGLAEFRSCASRLVLGDNSLAIRENRVGGVQSLGGTGALRIGADFLGRWYNGTDNKNTPIYVSSPTWENHNAVFSAAGFKDIRPYCYWDAEKRGLDLQGFLNDLENAPEFSIFVLHACAHNPTGTDPTPEQWKQIAAVMQRRFLFPFFDSAYQGFASGDLEKDAWAIRYFVSEGFELFCAQSFSKNFGLYNERVGNLTVVGKESDSVLRVLSQMEKIVRITWSNPPAQGARIVAATLSDPELFKEWKGNVKTMADRILTMRSELRARLEALKTPGTWSHITEQIGMFSFTGLNPKQVEYLVNEKHIYLLPSGRINMCGLTTKNLDYVATSIHEAVTKIQ</sequence>
<accession>P05201</accession>
<accession>Q3UJH8</accession>
<comment type="function">
    <text evidence="3">Biosynthesis of L-glutamate from L-aspartate or L-cysteine. Important regulator of levels of glutamate, the major excitatory neurotransmitter of the vertebrate central nervous system. Acts as a scavenger of glutamate in brain neuroprotection. The aspartate aminotransferase activity is involved in hepatic glucose synthesis during development and in adipocyte glyceroneogenesis. Using L-cysteine as substrate, regulates levels of mercaptopyruvate, an important source of hydrogen sulfide. Mercaptopyruvate is converted into H(2)S via the action of 3-mercaptopyruvate sulfurtransferase (3MST). Hydrogen sulfide is an important synaptic modulator and neuroprotectant in the brain.</text>
</comment>
<comment type="catalytic activity">
    <reaction evidence="3">
        <text>L-aspartate + 2-oxoglutarate = oxaloacetate + L-glutamate</text>
        <dbReference type="Rhea" id="RHEA:21824"/>
        <dbReference type="ChEBI" id="CHEBI:16452"/>
        <dbReference type="ChEBI" id="CHEBI:16810"/>
        <dbReference type="ChEBI" id="CHEBI:29985"/>
        <dbReference type="ChEBI" id="CHEBI:29991"/>
        <dbReference type="EC" id="2.6.1.1"/>
    </reaction>
    <physiologicalReaction direction="left-to-right" evidence="3">
        <dbReference type="Rhea" id="RHEA:21825"/>
    </physiologicalReaction>
</comment>
<comment type="catalytic activity">
    <reaction evidence="3">
        <text>L-cysteine + 2-oxoglutarate = 2-oxo-3-sulfanylpropanoate + L-glutamate</text>
        <dbReference type="Rhea" id="RHEA:17441"/>
        <dbReference type="ChEBI" id="CHEBI:16810"/>
        <dbReference type="ChEBI" id="CHEBI:29985"/>
        <dbReference type="ChEBI" id="CHEBI:35235"/>
        <dbReference type="ChEBI" id="CHEBI:57678"/>
        <dbReference type="EC" id="2.6.1.3"/>
    </reaction>
    <physiologicalReaction direction="left-to-right" evidence="3">
        <dbReference type="Rhea" id="RHEA:17442"/>
    </physiologicalReaction>
</comment>
<comment type="catalytic activity">
    <reaction evidence="4">
        <text>(2S)-2-aminobutanoate + 2-oxoglutarate = 2-oxobutanoate + L-glutamate</text>
        <dbReference type="Rhea" id="RHEA:70223"/>
        <dbReference type="ChEBI" id="CHEBI:16763"/>
        <dbReference type="ChEBI" id="CHEBI:16810"/>
        <dbReference type="ChEBI" id="CHEBI:29985"/>
        <dbReference type="ChEBI" id="CHEBI:74359"/>
    </reaction>
    <physiologicalReaction direction="right-to-left" evidence="4">
        <dbReference type="Rhea" id="RHEA:70225"/>
    </physiologicalReaction>
</comment>
<comment type="catalytic activity">
    <reaction evidence="3">
        <text>3-sulfino-L-alanine + 2-oxoglutarate = 3-sulfinopyruvate + L-glutamate</text>
        <dbReference type="Rhea" id="RHEA:70295"/>
        <dbReference type="ChEBI" id="CHEBI:16810"/>
        <dbReference type="ChEBI" id="CHEBI:29985"/>
        <dbReference type="ChEBI" id="CHEBI:61085"/>
        <dbReference type="ChEBI" id="CHEBI:140699"/>
    </reaction>
    <physiologicalReaction direction="right-to-left" evidence="3">
        <dbReference type="Rhea" id="RHEA:70297"/>
    </physiologicalReaction>
</comment>
<comment type="cofactor">
    <cofactor>
        <name>pyridoxal 5'-phosphate</name>
        <dbReference type="ChEBI" id="CHEBI:597326"/>
    </cofactor>
</comment>
<comment type="activity regulation">
    <text evidence="5">Inhibited by calcium ions.</text>
</comment>
<comment type="subunit">
    <text>Homodimer.</text>
</comment>
<comment type="subcellular location">
    <subcellularLocation>
        <location>Cytoplasm</location>
    </subcellularLocation>
</comment>
<comment type="tissue specificity">
    <text evidence="5">Expressed in neurons of the retina. Localizes to the inner and outer plexiform layers, the inner and outer nuclear layer and the outer segments of photoreceptors.</text>
</comment>
<comment type="miscellaneous">
    <text>In eukaryotes there are cytoplasmic, mitochondrial and chloroplastic isozymes.</text>
</comment>
<comment type="similarity">
    <text evidence="6">Belongs to the class-I pyridoxal-phosphate-dependent aminotransferase family.</text>
</comment>
<feature type="initiator methionine" description="Removed" evidence="2">
    <location>
        <position position="1"/>
    </location>
</feature>
<feature type="chain" id="PRO_0000123880" description="Aspartate aminotransferase, cytoplasmic">
    <location>
        <begin position="2"/>
        <end position="413"/>
    </location>
</feature>
<feature type="binding site" evidence="1">
    <location>
        <position position="39"/>
    </location>
    <ligand>
        <name>L-aspartate</name>
        <dbReference type="ChEBI" id="CHEBI:29991"/>
    </ligand>
</feature>
<feature type="binding site" evidence="1">
    <location>
        <position position="141"/>
    </location>
    <ligand>
        <name>L-aspartate</name>
        <dbReference type="ChEBI" id="CHEBI:29991"/>
    </ligand>
</feature>
<feature type="binding site" evidence="1">
    <location>
        <position position="195"/>
    </location>
    <ligand>
        <name>L-aspartate</name>
        <dbReference type="ChEBI" id="CHEBI:29991"/>
    </ligand>
</feature>
<feature type="binding site" evidence="1">
    <location>
        <position position="387"/>
    </location>
    <ligand>
        <name>L-aspartate</name>
        <dbReference type="ChEBI" id="CHEBI:29991"/>
    </ligand>
</feature>
<feature type="modified residue" description="Phosphoserine" evidence="3">
    <location>
        <position position="149"/>
    </location>
</feature>
<feature type="modified residue" description="N6-(pyridoxal phosphate)lysine">
    <location>
        <position position="259"/>
    </location>
</feature>
<feature type="modified residue" description="N6-succinyllysine" evidence="8">
    <location>
        <position position="318"/>
    </location>
</feature>
<feature type="sequence conflict" description="In Ref. 1; AAA37263, 2; CAA30275 and 4; AAH02057." evidence="6" ref="1 2 4">
    <original>L</original>
    <variation>P</variation>
    <location>
        <position position="94"/>
    </location>
</feature>
<feature type="sequence conflict" description="In Ref. 2; CAA30275." evidence="6" ref="2">
    <original>I</original>
    <variation>N</variation>
    <location>
        <position position="291"/>
    </location>
</feature>
<name>AATC_MOUSE</name>
<dbReference type="EC" id="2.6.1.1" evidence="3"/>
<dbReference type="EC" id="2.6.1.3" evidence="3"/>
<dbReference type="EMBL" id="J02623">
    <property type="protein sequence ID" value="AAA37263.1"/>
    <property type="molecule type" value="mRNA"/>
</dbReference>
<dbReference type="EMBL" id="X07302">
    <property type="protein sequence ID" value="CAA30275.1"/>
    <property type="molecule type" value="Genomic_DNA"/>
</dbReference>
<dbReference type="EMBL" id="X07303">
    <property type="protein sequence ID" value="CAA30275.1"/>
    <property type="status" value="JOINED"/>
    <property type="molecule type" value="Genomic_DNA"/>
</dbReference>
<dbReference type="EMBL" id="X07304">
    <property type="protein sequence ID" value="CAA30275.1"/>
    <property type="status" value="JOINED"/>
    <property type="molecule type" value="Genomic_DNA"/>
</dbReference>
<dbReference type="EMBL" id="X07305">
    <property type="protein sequence ID" value="CAA30275.1"/>
    <property type="status" value="JOINED"/>
    <property type="molecule type" value="Genomic_DNA"/>
</dbReference>
<dbReference type="EMBL" id="X07306">
    <property type="protein sequence ID" value="CAA30275.1"/>
    <property type="status" value="JOINED"/>
    <property type="molecule type" value="Genomic_DNA"/>
</dbReference>
<dbReference type="EMBL" id="X07307">
    <property type="protein sequence ID" value="CAA30275.1"/>
    <property type="status" value="JOINED"/>
    <property type="molecule type" value="Genomic_DNA"/>
</dbReference>
<dbReference type="EMBL" id="X07308">
    <property type="protein sequence ID" value="CAA30275.1"/>
    <property type="status" value="JOINED"/>
    <property type="molecule type" value="Genomic_DNA"/>
</dbReference>
<dbReference type="EMBL" id="X07309">
    <property type="protein sequence ID" value="CAA30275.1"/>
    <property type="status" value="JOINED"/>
    <property type="molecule type" value="Genomic_DNA"/>
</dbReference>
<dbReference type="EMBL" id="AK146445">
    <property type="protein sequence ID" value="BAE27177.1"/>
    <property type="molecule type" value="mRNA"/>
</dbReference>
<dbReference type="EMBL" id="BC002057">
    <property type="protein sequence ID" value="AAH02057.1"/>
    <property type="molecule type" value="mRNA"/>
</dbReference>
<dbReference type="CCDS" id="CCDS29832.1"/>
<dbReference type="PIR" id="S01076">
    <property type="entry name" value="S01076"/>
</dbReference>
<dbReference type="RefSeq" id="NP_034454.2">
    <property type="nucleotide sequence ID" value="NM_010324.2"/>
</dbReference>
<dbReference type="SMR" id="P05201"/>
<dbReference type="BioGRID" id="199999">
    <property type="interactions" value="14"/>
</dbReference>
<dbReference type="FunCoup" id="P05201">
    <property type="interactions" value="1863"/>
</dbReference>
<dbReference type="IntAct" id="P05201">
    <property type="interactions" value="20"/>
</dbReference>
<dbReference type="STRING" id="10090.ENSMUSP00000026196"/>
<dbReference type="GlyGen" id="P05201">
    <property type="glycosylation" value="2 sites, 1 O-linked glycan (1 site)"/>
</dbReference>
<dbReference type="iPTMnet" id="P05201"/>
<dbReference type="MetOSite" id="P05201"/>
<dbReference type="PhosphoSitePlus" id="P05201"/>
<dbReference type="SwissPalm" id="P05201"/>
<dbReference type="jPOST" id="P05201"/>
<dbReference type="PaxDb" id="10090-ENSMUSP00000026196"/>
<dbReference type="PeptideAtlas" id="P05201"/>
<dbReference type="ProteomicsDB" id="286016"/>
<dbReference type="Pumba" id="P05201"/>
<dbReference type="Antibodypedia" id="31077">
    <property type="antibodies" value="565 antibodies from 37 providers"/>
</dbReference>
<dbReference type="DNASU" id="14718"/>
<dbReference type="Ensembl" id="ENSMUST00000026196.14">
    <property type="protein sequence ID" value="ENSMUSP00000026196.8"/>
    <property type="gene ID" value="ENSMUSG00000025190.14"/>
</dbReference>
<dbReference type="GeneID" id="14718"/>
<dbReference type="KEGG" id="mmu:14718"/>
<dbReference type="UCSC" id="uc012bmb.1">
    <property type="organism name" value="mouse"/>
</dbReference>
<dbReference type="AGR" id="MGI:95791"/>
<dbReference type="CTD" id="2805"/>
<dbReference type="MGI" id="MGI:95791">
    <property type="gene designation" value="Got1"/>
</dbReference>
<dbReference type="VEuPathDB" id="HostDB:ENSMUSG00000025190"/>
<dbReference type="eggNOG" id="KOG1412">
    <property type="taxonomic scope" value="Eukaryota"/>
</dbReference>
<dbReference type="GeneTree" id="ENSGT00950000183082"/>
<dbReference type="HOGENOM" id="CLU_032440_1_2_1"/>
<dbReference type="InParanoid" id="P05201"/>
<dbReference type="OMA" id="GTWTHIT"/>
<dbReference type="OrthoDB" id="6752799at2759"/>
<dbReference type="PhylomeDB" id="P05201"/>
<dbReference type="TreeFam" id="TF314089"/>
<dbReference type="Reactome" id="R-MMU-8963693">
    <property type="pathway name" value="Aspartate and asparagine metabolism"/>
</dbReference>
<dbReference type="Reactome" id="R-MMU-9856872">
    <property type="pathway name" value="Malate-aspartate shuttle"/>
</dbReference>
<dbReference type="BioGRID-ORCS" id="14718">
    <property type="hits" value="0 hits in 79 CRISPR screens"/>
</dbReference>
<dbReference type="ChiTaRS" id="Got1">
    <property type="organism name" value="mouse"/>
</dbReference>
<dbReference type="PRO" id="PR:P05201"/>
<dbReference type="Proteomes" id="UP000000589">
    <property type="component" value="Chromosome 19"/>
</dbReference>
<dbReference type="RNAct" id="P05201">
    <property type="molecule type" value="protein"/>
</dbReference>
<dbReference type="Bgee" id="ENSMUSG00000025190">
    <property type="expression patterns" value="Expressed in extra-ocular muscle and 256 other cell types or tissues"/>
</dbReference>
<dbReference type="ExpressionAtlas" id="P05201">
    <property type="expression patterns" value="baseline and differential"/>
</dbReference>
<dbReference type="GO" id="GO:0043679">
    <property type="term" value="C:axon terminus"/>
    <property type="evidence" value="ECO:0007669"/>
    <property type="project" value="Ensembl"/>
</dbReference>
<dbReference type="GO" id="GO:0005829">
    <property type="term" value="C:cytosol"/>
    <property type="evidence" value="ECO:0000314"/>
    <property type="project" value="MGI"/>
</dbReference>
<dbReference type="GO" id="GO:0031406">
    <property type="term" value="F:carboxylic acid binding"/>
    <property type="evidence" value="ECO:0007669"/>
    <property type="project" value="Ensembl"/>
</dbReference>
<dbReference type="GO" id="GO:0004069">
    <property type="term" value="F:L-aspartate:2-oxoglutarate aminotransferase activity"/>
    <property type="evidence" value="ECO:0000314"/>
    <property type="project" value="MGI"/>
</dbReference>
<dbReference type="GO" id="GO:0047801">
    <property type="term" value="F:L-cysteine transaminase activity"/>
    <property type="evidence" value="ECO:0000250"/>
    <property type="project" value="UniProtKB"/>
</dbReference>
<dbReference type="GO" id="GO:0004609">
    <property type="term" value="F:phosphatidylserine decarboxylase activity"/>
    <property type="evidence" value="ECO:0000314"/>
    <property type="project" value="MGI"/>
</dbReference>
<dbReference type="GO" id="GO:0030170">
    <property type="term" value="F:pyridoxal phosphate binding"/>
    <property type="evidence" value="ECO:0007669"/>
    <property type="project" value="InterPro"/>
</dbReference>
<dbReference type="GO" id="GO:0006103">
    <property type="term" value="P:2-oxoglutarate metabolic process"/>
    <property type="evidence" value="ECO:0000250"/>
    <property type="project" value="UniProtKB"/>
</dbReference>
<dbReference type="GO" id="GO:0006532">
    <property type="term" value="P:aspartate biosynthetic process"/>
    <property type="evidence" value="ECO:0000314"/>
    <property type="project" value="MGI"/>
</dbReference>
<dbReference type="GO" id="GO:0006533">
    <property type="term" value="P:aspartate catabolic process"/>
    <property type="evidence" value="ECO:0007669"/>
    <property type="project" value="Ensembl"/>
</dbReference>
<dbReference type="GO" id="GO:0006531">
    <property type="term" value="P:aspartate metabolic process"/>
    <property type="evidence" value="ECO:0000250"/>
    <property type="project" value="UniProtKB"/>
</dbReference>
<dbReference type="GO" id="GO:0032869">
    <property type="term" value="P:cellular response to insulin stimulus"/>
    <property type="evidence" value="ECO:0007669"/>
    <property type="project" value="Ensembl"/>
</dbReference>
<dbReference type="GO" id="GO:0071260">
    <property type="term" value="P:cellular response to mechanical stimulus"/>
    <property type="evidence" value="ECO:0007669"/>
    <property type="project" value="Ensembl"/>
</dbReference>
<dbReference type="GO" id="GO:0055089">
    <property type="term" value="P:fatty acid homeostasis"/>
    <property type="evidence" value="ECO:0000314"/>
    <property type="project" value="MGI"/>
</dbReference>
<dbReference type="GO" id="GO:0006094">
    <property type="term" value="P:gluconeogenesis"/>
    <property type="evidence" value="ECO:0000314"/>
    <property type="project" value="MGI"/>
</dbReference>
<dbReference type="GO" id="GO:0019550">
    <property type="term" value="P:glutamate catabolic process to aspartate"/>
    <property type="evidence" value="ECO:0000314"/>
    <property type="project" value="MGI"/>
</dbReference>
<dbReference type="GO" id="GO:0006536">
    <property type="term" value="P:glutamate metabolic process"/>
    <property type="evidence" value="ECO:0000250"/>
    <property type="project" value="UniProtKB"/>
</dbReference>
<dbReference type="GO" id="GO:0006114">
    <property type="term" value="P:glycerol biosynthetic process"/>
    <property type="evidence" value="ECO:0000314"/>
    <property type="project" value="MGI"/>
</dbReference>
<dbReference type="GO" id="GO:0097054">
    <property type="term" value="P:L-glutamate biosynthetic process"/>
    <property type="evidence" value="ECO:0007669"/>
    <property type="project" value="Ensembl"/>
</dbReference>
<dbReference type="GO" id="GO:0043490">
    <property type="term" value="P:malate-aspartate shuttle"/>
    <property type="evidence" value="ECO:0000315"/>
    <property type="project" value="MGI"/>
</dbReference>
<dbReference type="GO" id="GO:0032966">
    <property type="term" value="P:negative regulation of collagen biosynthetic process"/>
    <property type="evidence" value="ECO:0007669"/>
    <property type="project" value="Ensembl"/>
</dbReference>
<dbReference type="GO" id="GO:0051481">
    <property type="term" value="P:negative regulation of cytosolic calcium ion concentration"/>
    <property type="evidence" value="ECO:0007669"/>
    <property type="project" value="Ensembl"/>
</dbReference>
<dbReference type="GO" id="GO:0051902">
    <property type="term" value="P:negative regulation of mitochondrial depolarization"/>
    <property type="evidence" value="ECO:0007669"/>
    <property type="project" value="Ensembl"/>
</dbReference>
<dbReference type="GO" id="GO:0007219">
    <property type="term" value="P:Notch signaling pathway"/>
    <property type="evidence" value="ECO:0000314"/>
    <property type="project" value="MGI"/>
</dbReference>
<dbReference type="GO" id="GO:0006107">
    <property type="term" value="P:oxaloacetate metabolic process"/>
    <property type="evidence" value="ECO:0000314"/>
    <property type="project" value="MGI"/>
</dbReference>
<dbReference type="GO" id="GO:0030511">
    <property type="term" value="P:positive regulation of transforming growth factor beta receptor signaling pathway"/>
    <property type="evidence" value="ECO:0007669"/>
    <property type="project" value="Ensembl"/>
</dbReference>
<dbReference type="GO" id="GO:0046686">
    <property type="term" value="P:response to cadmium ion"/>
    <property type="evidence" value="ECO:0007669"/>
    <property type="project" value="Ensembl"/>
</dbReference>
<dbReference type="GO" id="GO:0009743">
    <property type="term" value="P:response to carbohydrate"/>
    <property type="evidence" value="ECO:0007669"/>
    <property type="project" value="Ensembl"/>
</dbReference>
<dbReference type="GO" id="GO:0051384">
    <property type="term" value="P:response to glucocorticoid"/>
    <property type="evidence" value="ECO:0007669"/>
    <property type="project" value="Ensembl"/>
</dbReference>
<dbReference type="GO" id="GO:0035902">
    <property type="term" value="P:response to immobilization stress"/>
    <property type="evidence" value="ECO:0007669"/>
    <property type="project" value="Ensembl"/>
</dbReference>
<dbReference type="GO" id="GO:1990267">
    <property type="term" value="P:response to transition metal nanoparticle"/>
    <property type="evidence" value="ECO:0007669"/>
    <property type="project" value="Ensembl"/>
</dbReference>
<dbReference type="GO" id="GO:0060290">
    <property type="term" value="P:transdifferentiation"/>
    <property type="evidence" value="ECO:0007669"/>
    <property type="project" value="Ensembl"/>
</dbReference>
<dbReference type="CDD" id="cd00609">
    <property type="entry name" value="AAT_like"/>
    <property type="match status" value="1"/>
</dbReference>
<dbReference type="FunFam" id="3.40.640.10:FF:000044">
    <property type="entry name" value="Aspartate aminotransferase"/>
    <property type="match status" value="1"/>
</dbReference>
<dbReference type="FunFam" id="3.90.1150.10:FF:000001">
    <property type="entry name" value="Aspartate aminotransferase"/>
    <property type="match status" value="1"/>
</dbReference>
<dbReference type="Gene3D" id="3.90.1150.10">
    <property type="entry name" value="Aspartate Aminotransferase, domain 1"/>
    <property type="match status" value="1"/>
</dbReference>
<dbReference type="Gene3D" id="3.40.640.10">
    <property type="entry name" value="Type I PLP-dependent aspartate aminotransferase-like (Major domain)"/>
    <property type="match status" value="1"/>
</dbReference>
<dbReference type="InterPro" id="IPR004839">
    <property type="entry name" value="Aminotransferase_I/II_large"/>
</dbReference>
<dbReference type="InterPro" id="IPR000796">
    <property type="entry name" value="Asp_trans"/>
</dbReference>
<dbReference type="InterPro" id="IPR004838">
    <property type="entry name" value="NHTrfase_class1_PyrdxlP-BS"/>
</dbReference>
<dbReference type="InterPro" id="IPR015424">
    <property type="entry name" value="PyrdxlP-dep_Trfase"/>
</dbReference>
<dbReference type="InterPro" id="IPR015421">
    <property type="entry name" value="PyrdxlP-dep_Trfase_major"/>
</dbReference>
<dbReference type="InterPro" id="IPR015422">
    <property type="entry name" value="PyrdxlP-dep_Trfase_small"/>
</dbReference>
<dbReference type="NCBIfam" id="NF006719">
    <property type="entry name" value="PRK09257.1"/>
    <property type="match status" value="1"/>
</dbReference>
<dbReference type="PANTHER" id="PTHR11879">
    <property type="entry name" value="ASPARTATE AMINOTRANSFERASE"/>
    <property type="match status" value="1"/>
</dbReference>
<dbReference type="PANTHER" id="PTHR11879:SF3">
    <property type="entry name" value="ASPARTATE AMINOTRANSFERASE, CYTOPLASMIC"/>
    <property type="match status" value="1"/>
</dbReference>
<dbReference type="Pfam" id="PF00155">
    <property type="entry name" value="Aminotran_1_2"/>
    <property type="match status" value="1"/>
</dbReference>
<dbReference type="PRINTS" id="PR00799">
    <property type="entry name" value="TRANSAMINASE"/>
</dbReference>
<dbReference type="SUPFAM" id="SSF53383">
    <property type="entry name" value="PLP-dependent transferases"/>
    <property type="match status" value="1"/>
</dbReference>
<dbReference type="PROSITE" id="PS00105">
    <property type="entry name" value="AA_TRANSFER_CLASS_1"/>
    <property type="match status" value="1"/>
</dbReference>
<proteinExistence type="evidence at protein level"/>